<organism>
    <name type="scientific">Rickettsia rickettsii (strain Sheila Smith)</name>
    <dbReference type="NCBI Taxonomy" id="392021"/>
    <lineage>
        <taxon>Bacteria</taxon>
        <taxon>Pseudomonadati</taxon>
        <taxon>Pseudomonadota</taxon>
        <taxon>Alphaproteobacteria</taxon>
        <taxon>Rickettsiales</taxon>
        <taxon>Rickettsiaceae</taxon>
        <taxon>Rickettsieae</taxon>
        <taxon>Rickettsia</taxon>
        <taxon>spotted fever group</taxon>
    </lineage>
</organism>
<name>QUEA_RICRS</name>
<protein>
    <recommendedName>
        <fullName evidence="1">S-adenosylmethionine:tRNA ribosyltransferase-isomerase</fullName>
        <ecNumber evidence="1">2.4.99.17</ecNumber>
    </recommendedName>
    <alternativeName>
        <fullName evidence="1">Queuosine biosynthesis protein QueA</fullName>
    </alternativeName>
</protein>
<evidence type="ECO:0000255" key="1">
    <source>
        <dbReference type="HAMAP-Rule" id="MF_00113"/>
    </source>
</evidence>
<keyword id="KW-0963">Cytoplasm</keyword>
<keyword id="KW-0671">Queuosine biosynthesis</keyword>
<keyword id="KW-0949">S-adenosyl-L-methionine</keyword>
<keyword id="KW-0808">Transferase</keyword>
<proteinExistence type="inferred from homology"/>
<gene>
    <name evidence="1" type="primary">queA</name>
    <name type="ordered locus">A1G_01620</name>
</gene>
<dbReference type="EC" id="2.4.99.17" evidence="1"/>
<dbReference type="EMBL" id="CP000848">
    <property type="protein sequence ID" value="ABV75894.1"/>
    <property type="molecule type" value="Genomic_DNA"/>
</dbReference>
<dbReference type="RefSeq" id="WP_012150499.1">
    <property type="nucleotide sequence ID" value="NZ_CP121767.1"/>
</dbReference>
<dbReference type="SMR" id="A8GR69"/>
<dbReference type="GeneID" id="79937063"/>
<dbReference type="KEGG" id="rri:A1G_01620"/>
<dbReference type="HOGENOM" id="CLU_039110_1_0_5"/>
<dbReference type="UniPathway" id="UPA00392"/>
<dbReference type="Proteomes" id="UP000006832">
    <property type="component" value="Chromosome"/>
</dbReference>
<dbReference type="GO" id="GO:0005737">
    <property type="term" value="C:cytoplasm"/>
    <property type="evidence" value="ECO:0007669"/>
    <property type="project" value="UniProtKB-SubCell"/>
</dbReference>
<dbReference type="GO" id="GO:0051075">
    <property type="term" value="F:S-adenosylmethionine:tRNA ribosyltransferase-isomerase activity"/>
    <property type="evidence" value="ECO:0007669"/>
    <property type="project" value="UniProtKB-EC"/>
</dbReference>
<dbReference type="GO" id="GO:0008616">
    <property type="term" value="P:queuosine biosynthetic process"/>
    <property type="evidence" value="ECO:0007669"/>
    <property type="project" value="UniProtKB-UniRule"/>
</dbReference>
<dbReference type="GO" id="GO:0002099">
    <property type="term" value="P:tRNA wobble guanine modification"/>
    <property type="evidence" value="ECO:0007669"/>
    <property type="project" value="TreeGrafter"/>
</dbReference>
<dbReference type="Gene3D" id="2.40.10.240">
    <property type="entry name" value="QueA-like"/>
    <property type="match status" value="1"/>
</dbReference>
<dbReference type="Gene3D" id="3.40.1780.10">
    <property type="entry name" value="QueA-like"/>
    <property type="match status" value="1"/>
</dbReference>
<dbReference type="HAMAP" id="MF_00113">
    <property type="entry name" value="QueA"/>
    <property type="match status" value="1"/>
</dbReference>
<dbReference type="InterPro" id="IPR003699">
    <property type="entry name" value="QueA"/>
</dbReference>
<dbReference type="InterPro" id="IPR042118">
    <property type="entry name" value="QueA_dom1"/>
</dbReference>
<dbReference type="InterPro" id="IPR042119">
    <property type="entry name" value="QueA_dom2"/>
</dbReference>
<dbReference type="InterPro" id="IPR036100">
    <property type="entry name" value="QueA_sf"/>
</dbReference>
<dbReference type="NCBIfam" id="NF002398">
    <property type="entry name" value="PRK01424.1"/>
    <property type="match status" value="1"/>
</dbReference>
<dbReference type="PANTHER" id="PTHR30307">
    <property type="entry name" value="S-ADENOSYLMETHIONINE:TRNA RIBOSYLTRANSFERASE-ISOMERASE"/>
    <property type="match status" value="1"/>
</dbReference>
<dbReference type="PANTHER" id="PTHR30307:SF0">
    <property type="entry name" value="S-ADENOSYLMETHIONINE:TRNA RIBOSYLTRANSFERASE-ISOMERASE"/>
    <property type="match status" value="1"/>
</dbReference>
<dbReference type="Pfam" id="PF02547">
    <property type="entry name" value="Queuosine_synth"/>
    <property type="match status" value="1"/>
</dbReference>
<dbReference type="SUPFAM" id="SSF111337">
    <property type="entry name" value="QueA-like"/>
    <property type="match status" value="1"/>
</dbReference>
<accession>A8GR69</accession>
<reference key="1">
    <citation type="submission" date="2007-09" db="EMBL/GenBank/DDBJ databases">
        <title>Complete genome sequence of Rickettsia rickettsii.</title>
        <authorList>
            <person name="Madan A."/>
            <person name="Fahey J."/>
            <person name="Helton E."/>
            <person name="Ketteman M."/>
            <person name="Madan A."/>
            <person name="Rodrigues S."/>
            <person name="Sanchez A."/>
            <person name="Dasch G."/>
            <person name="Eremeeva M."/>
        </authorList>
    </citation>
    <scope>NUCLEOTIDE SEQUENCE [LARGE SCALE GENOMIC DNA]</scope>
    <source>
        <strain>Sheila Smith</strain>
    </source>
</reference>
<feature type="chain" id="PRO_1000015263" description="S-adenosylmethionine:tRNA ribosyltransferase-isomerase">
    <location>
        <begin position="1"/>
        <end position="365"/>
    </location>
</feature>
<comment type="function">
    <text evidence="1">Transfers and isomerizes the ribose moiety from AdoMet to the 7-aminomethyl group of 7-deazaguanine (preQ1-tRNA) to give epoxyqueuosine (oQ-tRNA).</text>
</comment>
<comment type="catalytic activity">
    <reaction evidence="1">
        <text>7-aminomethyl-7-carbaguanosine(34) in tRNA + S-adenosyl-L-methionine = epoxyqueuosine(34) in tRNA + adenine + L-methionine + 2 H(+)</text>
        <dbReference type="Rhea" id="RHEA:32155"/>
        <dbReference type="Rhea" id="RHEA-COMP:10342"/>
        <dbReference type="Rhea" id="RHEA-COMP:18582"/>
        <dbReference type="ChEBI" id="CHEBI:15378"/>
        <dbReference type="ChEBI" id="CHEBI:16708"/>
        <dbReference type="ChEBI" id="CHEBI:57844"/>
        <dbReference type="ChEBI" id="CHEBI:59789"/>
        <dbReference type="ChEBI" id="CHEBI:82833"/>
        <dbReference type="ChEBI" id="CHEBI:194443"/>
        <dbReference type="EC" id="2.4.99.17"/>
    </reaction>
</comment>
<comment type="pathway">
    <text evidence="1">tRNA modification; tRNA-queuosine biosynthesis.</text>
</comment>
<comment type="subunit">
    <text evidence="1">Monomer.</text>
</comment>
<comment type="subcellular location">
    <subcellularLocation>
        <location evidence="1">Cytoplasm</location>
    </subcellularLocation>
</comment>
<comment type="similarity">
    <text evidence="1">Belongs to the QueA family.</text>
</comment>
<sequence>MKLSDFDFDLPSELIAQYPSSERDNSDLLIAVTPPIKTKFYNIIDYLKEGDLLVFNNSKVIKAQLNLGKNITINLNQKLSDDSWSAFAKPARKLHVNDEFYFDNHKVIITEKLAMGEIKVKFKLNDISVFEFLNKYGEMPLPVYIRRSHSLCHPVATTTGSKTYLNNDWIPWSNHGMTNTQNDNDRYQTVYSQIEGSVAAPTAGLHFTKDILDKLKAEGIQATFLTLHVGAGTFLPVKTENIHEHKMHTEYCSITPDTAEIINKAKQEGKRIIAVGTTTLRTLESSCNNGIVKAGSFKTDIFITPGFKFQTADMLLTNFHFPKSTLFMLICAFAGFKEMHELYKYAIKEAMRFFSYGDATLLCRK</sequence>